<keyword id="KW-0067">ATP-binding</keyword>
<keyword id="KW-0418">Kinase</keyword>
<keyword id="KW-0460">Magnesium</keyword>
<keyword id="KW-0547">Nucleotide-binding</keyword>
<keyword id="KW-0808">Transferase</keyword>
<organism>
    <name type="scientific">Salmonella paratyphi A (strain ATCC 9150 / SARB42)</name>
    <dbReference type="NCBI Taxonomy" id="295319"/>
    <lineage>
        <taxon>Bacteria</taxon>
        <taxon>Pseudomonadati</taxon>
        <taxon>Pseudomonadota</taxon>
        <taxon>Gammaproteobacteria</taxon>
        <taxon>Enterobacterales</taxon>
        <taxon>Enterobacteriaceae</taxon>
        <taxon>Salmonella</taxon>
    </lineage>
</organism>
<comment type="function">
    <text evidence="1">Pyridoxal kinase involved in the salvage pathway of pyridoxal 5'-phosphate (PLP). Catalyzes the phosphorylation of pyridoxal to PLP.</text>
</comment>
<comment type="catalytic activity">
    <reaction evidence="1">
        <text>pyridoxal + ATP = pyridoxal 5'-phosphate + ADP + H(+)</text>
        <dbReference type="Rhea" id="RHEA:10224"/>
        <dbReference type="ChEBI" id="CHEBI:15378"/>
        <dbReference type="ChEBI" id="CHEBI:17310"/>
        <dbReference type="ChEBI" id="CHEBI:30616"/>
        <dbReference type="ChEBI" id="CHEBI:456216"/>
        <dbReference type="ChEBI" id="CHEBI:597326"/>
        <dbReference type="EC" id="2.7.1.35"/>
    </reaction>
</comment>
<comment type="cofactor">
    <cofactor evidence="1">
        <name>Mg(2+)</name>
        <dbReference type="ChEBI" id="CHEBI:18420"/>
    </cofactor>
</comment>
<comment type="pathway">
    <text evidence="1">Cofactor metabolism; pyridoxal 5'-phosphate salvage; pyridoxal 5'-phosphate from pyridoxal: step 1/1.</text>
</comment>
<comment type="subunit">
    <text evidence="1">Homodimer.</text>
</comment>
<comment type="similarity">
    <text evidence="1">Belongs to the pyridoxine kinase family. PdxY subfamily.</text>
</comment>
<evidence type="ECO:0000255" key="1">
    <source>
        <dbReference type="HAMAP-Rule" id="MF_01639"/>
    </source>
</evidence>
<name>PDXY_SALPA</name>
<gene>
    <name evidence="1" type="primary">pdxY</name>
    <name type="ordered locus">SPA1403</name>
</gene>
<feature type="chain" id="PRO_0000269827" description="Pyridoxal kinase PdxY">
    <location>
        <begin position="1"/>
        <end position="286"/>
    </location>
</feature>
<feature type="binding site" evidence="1">
    <location>
        <position position="9"/>
    </location>
    <ligand>
        <name>substrate</name>
    </ligand>
</feature>
<feature type="binding site" evidence="1">
    <location>
        <begin position="44"/>
        <end position="45"/>
    </location>
    <ligand>
        <name>substrate</name>
    </ligand>
</feature>
<feature type="binding site" evidence="1">
    <location>
        <position position="111"/>
    </location>
    <ligand>
        <name>ATP</name>
        <dbReference type="ChEBI" id="CHEBI:30616"/>
    </ligand>
</feature>
<feature type="binding site" evidence="1">
    <location>
        <position position="143"/>
    </location>
    <ligand>
        <name>ATP</name>
        <dbReference type="ChEBI" id="CHEBI:30616"/>
    </ligand>
</feature>
<feature type="binding site" evidence="1">
    <location>
        <position position="148"/>
    </location>
    <ligand>
        <name>ATP</name>
        <dbReference type="ChEBI" id="CHEBI:30616"/>
    </ligand>
</feature>
<feature type="binding site" evidence="1">
    <location>
        <position position="181"/>
    </location>
    <ligand>
        <name>ATP</name>
        <dbReference type="ChEBI" id="CHEBI:30616"/>
    </ligand>
</feature>
<feature type="binding site" evidence="1">
    <location>
        <begin position="208"/>
        <end position="211"/>
    </location>
    <ligand>
        <name>ATP</name>
        <dbReference type="ChEBI" id="CHEBI:30616"/>
    </ligand>
</feature>
<feature type="binding site" evidence="1">
    <location>
        <position position="223"/>
    </location>
    <ligand>
        <name>substrate</name>
    </ligand>
</feature>
<dbReference type="EC" id="2.7.1.35" evidence="1"/>
<dbReference type="EMBL" id="CP000026">
    <property type="protein sequence ID" value="AAV77344.1"/>
    <property type="molecule type" value="Genomic_DNA"/>
</dbReference>
<dbReference type="RefSeq" id="WP_000789736.1">
    <property type="nucleotide sequence ID" value="NC_006511.1"/>
</dbReference>
<dbReference type="SMR" id="Q5PIK8"/>
<dbReference type="KEGG" id="spt:SPA1403"/>
<dbReference type="HOGENOM" id="CLU_046496_3_0_6"/>
<dbReference type="UniPathway" id="UPA01068">
    <property type="reaction ID" value="UER00298"/>
</dbReference>
<dbReference type="Proteomes" id="UP000008185">
    <property type="component" value="Chromosome"/>
</dbReference>
<dbReference type="GO" id="GO:0005829">
    <property type="term" value="C:cytosol"/>
    <property type="evidence" value="ECO:0007669"/>
    <property type="project" value="TreeGrafter"/>
</dbReference>
<dbReference type="GO" id="GO:0005524">
    <property type="term" value="F:ATP binding"/>
    <property type="evidence" value="ECO:0007669"/>
    <property type="project" value="UniProtKB-UniRule"/>
</dbReference>
<dbReference type="GO" id="GO:0000287">
    <property type="term" value="F:magnesium ion binding"/>
    <property type="evidence" value="ECO:0007669"/>
    <property type="project" value="UniProtKB-UniRule"/>
</dbReference>
<dbReference type="GO" id="GO:0008478">
    <property type="term" value="F:pyridoxal kinase activity"/>
    <property type="evidence" value="ECO:0007669"/>
    <property type="project" value="UniProtKB-UniRule"/>
</dbReference>
<dbReference type="GO" id="GO:0009443">
    <property type="term" value="P:pyridoxal 5'-phosphate salvage"/>
    <property type="evidence" value="ECO:0007669"/>
    <property type="project" value="UniProtKB-UniRule"/>
</dbReference>
<dbReference type="CDD" id="cd01173">
    <property type="entry name" value="pyridoxal_pyridoxamine_kinase"/>
    <property type="match status" value="1"/>
</dbReference>
<dbReference type="FunFam" id="3.40.1190.20:FF:000008">
    <property type="entry name" value="Pyridoxal kinase PdxY"/>
    <property type="match status" value="1"/>
</dbReference>
<dbReference type="Gene3D" id="3.40.1190.20">
    <property type="match status" value="1"/>
</dbReference>
<dbReference type="HAMAP" id="MF_01639">
    <property type="entry name" value="PdxY"/>
    <property type="match status" value="1"/>
</dbReference>
<dbReference type="InterPro" id="IPR013749">
    <property type="entry name" value="PM/HMP-P_kinase-1"/>
</dbReference>
<dbReference type="InterPro" id="IPR004625">
    <property type="entry name" value="PyrdxlKinase"/>
</dbReference>
<dbReference type="InterPro" id="IPR023685">
    <property type="entry name" value="Pyridoxal_kinase_PdxY"/>
</dbReference>
<dbReference type="InterPro" id="IPR029056">
    <property type="entry name" value="Ribokinase-like"/>
</dbReference>
<dbReference type="NCBIfam" id="NF004398">
    <property type="entry name" value="PRK05756.1"/>
    <property type="match status" value="1"/>
</dbReference>
<dbReference type="NCBIfam" id="TIGR00687">
    <property type="entry name" value="pyridox_kin"/>
    <property type="match status" value="1"/>
</dbReference>
<dbReference type="PANTHER" id="PTHR10534">
    <property type="entry name" value="PYRIDOXAL KINASE"/>
    <property type="match status" value="1"/>
</dbReference>
<dbReference type="PANTHER" id="PTHR10534:SF2">
    <property type="entry name" value="PYRIDOXAL KINASE"/>
    <property type="match status" value="1"/>
</dbReference>
<dbReference type="Pfam" id="PF08543">
    <property type="entry name" value="Phos_pyr_kin"/>
    <property type="match status" value="1"/>
</dbReference>
<dbReference type="SUPFAM" id="SSF53613">
    <property type="entry name" value="Ribokinase-like"/>
    <property type="match status" value="1"/>
</dbReference>
<accession>Q5PIK8</accession>
<sequence length="286" mass="31112">MKNILAIQSHVVFGHAGNSAAEFPMRRLGANVWPLNTVQFSNHTQYGKWTGCVMPPSHLTEIVQGIADIGQLAHCDAVLSGYLGSAEQGEHILGIVRQVKAANPQAKYFCDPVMGHPEKGCIVAPGVAEFHVRYALPASDIIAPNLIELEILSKHSVNNVNDAVQAARELIAQGPEIVLVKHLARAGYSSERFEMLLVTAQEAWHISRPLVDFGSRQPVGVGDVTSGLLLVKLLQGATLQQALEHVTAAVYEIMIATKTMQEYELQVVAAQDRIANPEHYFSATRL</sequence>
<reference key="1">
    <citation type="journal article" date="2004" name="Nat. Genet.">
        <title>Comparison of genome degradation in Paratyphi A and Typhi, human-restricted serovars of Salmonella enterica that cause typhoid.</title>
        <authorList>
            <person name="McClelland M."/>
            <person name="Sanderson K.E."/>
            <person name="Clifton S.W."/>
            <person name="Latreille P."/>
            <person name="Porwollik S."/>
            <person name="Sabo A."/>
            <person name="Meyer R."/>
            <person name="Bieri T."/>
            <person name="Ozersky P."/>
            <person name="McLellan M."/>
            <person name="Harkins C.R."/>
            <person name="Wang C."/>
            <person name="Nguyen C."/>
            <person name="Berghoff A."/>
            <person name="Elliott G."/>
            <person name="Kohlberg S."/>
            <person name="Strong C."/>
            <person name="Du F."/>
            <person name="Carter J."/>
            <person name="Kremizki C."/>
            <person name="Layman D."/>
            <person name="Leonard S."/>
            <person name="Sun H."/>
            <person name="Fulton L."/>
            <person name="Nash W."/>
            <person name="Miner T."/>
            <person name="Minx P."/>
            <person name="Delehaunty K."/>
            <person name="Fronick C."/>
            <person name="Magrini V."/>
            <person name="Nhan M."/>
            <person name="Warren W."/>
            <person name="Florea L."/>
            <person name="Spieth J."/>
            <person name="Wilson R.K."/>
        </authorList>
    </citation>
    <scope>NUCLEOTIDE SEQUENCE [LARGE SCALE GENOMIC DNA]</scope>
    <source>
        <strain>ATCC 9150 / SARB42</strain>
    </source>
</reference>
<protein>
    <recommendedName>
        <fullName evidence="1">Pyridoxal kinase PdxY</fullName>
        <shortName evidence="1">PL kinase</shortName>
        <ecNumber evidence="1">2.7.1.35</ecNumber>
    </recommendedName>
</protein>
<proteinExistence type="inferred from homology"/>